<accession>Q8XIY5</accession>
<proteinExistence type="inferred from homology"/>
<sequence length="336" mass="38954">MEKLFIPKGYKPLLSLRETEVAIKELKDFFEDSLAKNLNLTRVSAPLFVNKGSGLNDDLNGIERPVSFDMKAMPEFNIQIVHSLAKWKRLALHRYEFEHGEGLYTDMNAIRRDEDLDNIHSIYVDQWDWEKIIDKEERNLETLKETVKSIYGTFKATEDFIVAKYPHIEKILPEDITFITSQELEDRYPDLTSKERETAICKEFGAVFIIGIGGKLASGEKHDDRSPDYDDWTLNGDLLFYYPLFDEAVELSSMGIRVDEESLLKQLKIAECEERKELPFHQMLLEGKLPYTIGGGIGQSRICMFFLRKAHIGEVQASMWDEDMIRTCEENNIHLL</sequence>
<reference key="1">
    <citation type="journal article" date="2002" name="Proc. Natl. Acad. Sci. U.S.A.">
        <title>Complete genome sequence of Clostridium perfringens, an anaerobic flesh-eater.</title>
        <authorList>
            <person name="Shimizu T."/>
            <person name="Ohtani K."/>
            <person name="Hirakawa H."/>
            <person name="Ohshima K."/>
            <person name="Yamashita A."/>
            <person name="Shiba T."/>
            <person name="Ogasawara N."/>
            <person name="Hattori M."/>
            <person name="Kuhara S."/>
            <person name="Hayashi H."/>
        </authorList>
    </citation>
    <scope>NUCLEOTIDE SEQUENCE [LARGE SCALE GENOMIC DNA]</scope>
    <source>
        <strain>13 / Type A</strain>
    </source>
</reference>
<comment type="catalytic activity">
    <reaction evidence="1">
        <text>L-aspartate + NH4(+) + ATP = L-asparagine + AMP + diphosphate + H(+)</text>
        <dbReference type="Rhea" id="RHEA:11372"/>
        <dbReference type="ChEBI" id="CHEBI:15378"/>
        <dbReference type="ChEBI" id="CHEBI:28938"/>
        <dbReference type="ChEBI" id="CHEBI:29991"/>
        <dbReference type="ChEBI" id="CHEBI:30616"/>
        <dbReference type="ChEBI" id="CHEBI:33019"/>
        <dbReference type="ChEBI" id="CHEBI:58048"/>
        <dbReference type="ChEBI" id="CHEBI:456215"/>
        <dbReference type="EC" id="6.3.1.1"/>
    </reaction>
</comment>
<comment type="pathway">
    <text evidence="1">Amino-acid biosynthesis; L-asparagine biosynthesis; L-asparagine from L-aspartate (ammonia route): step 1/1.</text>
</comment>
<comment type="subcellular location">
    <subcellularLocation>
        <location evidence="1">Cytoplasm</location>
    </subcellularLocation>
</comment>
<comment type="similarity">
    <text evidence="1">Belongs to the class-II aminoacyl-tRNA synthetase family. AsnA subfamily.</text>
</comment>
<dbReference type="EC" id="6.3.1.1" evidence="1"/>
<dbReference type="EMBL" id="BA000016">
    <property type="protein sequence ID" value="BAB81684.1"/>
    <property type="molecule type" value="Genomic_DNA"/>
</dbReference>
<dbReference type="RefSeq" id="WP_003470951.1">
    <property type="nucleotide sequence ID" value="NC_003366.1"/>
</dbReference>
<dbReference type="SMR" id="Q8XIY5"/>
<dbReference type="STRING" id="195102.gene:10491247"/>
<dbReference type="KEGG" id="cpe:CPE1978"/>
<dbReference type="HOGENOM" id="CLU_071543_0_0_9"/>
<dbReference type="UniPathway" id="UPA00134">
    <property type="reaction ID" value="UER00194"/>
</dbReference>
<dbReference type="Proteomes" id="UP000000818">
    <property type="component" value="Chromosome"/>
</dbReference>
<dbReference type="GO" id="GO:0005829">
    <property type="term" value="C:cytosol"/>
    <property type="evidence" value="ECO:0007669"/>
    <property type="project" value="TreeGrafter"/>
</dbReference>
<dbReference type="GO" id="GO:0004071">
    <property type="term" value="F:aspartate-ammonia ligase activity"/>
    <property type="evidence" value="ECO:0007669"/>
    <property type="project" value="UniProtKB-UniRule"/>
</dbReference>
<dbReference type="GO" id="GO:0005524">
    <property type="term" value="F:ATP binding"/>
    <property type="evidence" value="ECO:0007669"/>
    <property type="project" value="UniProtKB-UniRule"/>
</dbReference>
<dbReference type="GO" id="GO:0140096">
    <property type="term" value="F:catalytic activity, acting on a protein"/>
    <property type="evidence" value="ECO:0007669"/>
    <property type="project" value="UniProtKB-ARBA"/>
</dbReference>
<dbReference type="GO" id="GO:0016740">
    <property type="term" value="F:transferase activity"/>
    <property type="evidence" value="ECO:0007669"/>
    <property type="project" value="UniProtKB-ARBA"/>
</dbReference>
<dbReference type="GO" id="GO:0070981">
    <property type="term" value="P:L-asparagine biosynthetic process"/>
    <property type="evidence" value="ECO:0007669"/>
    <property type="project" value="UniProtKB-UniRule"/>
</dbReference>
<dbReference type="CDD" id="cd00645">
    <property type="entry name" value="AsnA"/>
    <property type="match status" value="1"/>
</dbReference>
<dbReference type="Gene3D" id="3.30.930.10">
    <property type="entry name" value="Bira Bifunctional Protein, Domain 2"/>
    <property type="match status" value="1"/>
</dbReference>
<dbReference type="HAMAP" id="MF_00555">
    <property type="entry name" value="AsnA"/>
    <property type="match status" value="1"/>
</dbReference>
<dbReference type="InterPro" id="IPR006195">
    <property type="entry name" value="aa-tRNA-synth_II"/>
</dbReference>
<dbReference type="InterPro" id="IPR045864">
    <property type="entry name" value="aa-tRNA-synth_II/BPL/LPL"/>
</dbReference>
<dbReference type="InterPro" id="IPR004618">
    <property type="entry name" value="AsnA"/>
</dbReference>
<dbReference type="NCBIfam" id="TIGR00669">
    <property type="entry name" value="asnA"/>
    <property type="match status" value="1"/>
</dbReference>
<dbReference type="PANTHER" id="PTHR30073">
    <property type="entry name" value="ASPARTATE--AMMONIA LIGASE"/>
    <property type="match status" value="1"/>
</dbReference>
<dbReference type="PANTHER" id="PTHR30073:SF5">
    <property type="entry name" value="ASPARTATE--AMMONIA LIGASE"/>
    <property type="match status" value="1"/>
</dbReference>
<dbReference type="Pfam" id="PF03590">
    <property type="entry name" value="AsnA"/>
    <property type="match status" value="1"/>
</dbReference>
<dbReference type="PIRSF" id="PIRSF001555">
    <property type="entry name" value="Asp_ammon_ligase"/>
    <property type="match status" value="1"/>
</dbReference>
<dbReference type="SUPFAM" id="SSF55681">
    <property type="entry name" value="Class II aaRS and biotin synthetases"/>
    <property type="match status" value="1"/>
</dbReference>
<dbReference type="PROSITE" id="PS50862">
    <property type="entry name" value="AA_TRNA_LIGASE_II"/>
    <property type="match status" value="1"/>
</dbReference>
<organism>
    <name type="scientific">Clostridium perfringens (strain 13 / Type A)</name>
    <dbReference type="NCBI Taxonomy" id="195102"/>
    <lineage>
        <taxon>Bacteria</taxon>
        <taxon>Bacillati</taxon>
        <taxon>Bacillota</taxon>
        <taxon>Clostridia</taxon>
        <taxon>Eubacteriales</taxon>
        <taxon>Clostridiaceae</taxon>
        <taxon>Clostridium</taxon>
    </lineage>
</organism>
<name>ASNA_CLOPE</name>
<feature type="chain" id="PRO_0000195871" description="Aspartate--ammonia ligase">
    <location>
        <begin position="1"/>
        <end position="336"/>
    </location>
</feature>
<keyword id="KW-0028">Amino-acid biosynthesis</keyword>
<keyword id="KW-0061">Asparagine biosynthesis</keyword>
<keyword id="KW-0067">ATP-binding</keyword>
<keyword id="KW-0963">Cytoplasm</keyword>
<keyword id="KW-0436">Ligase</keyword>
<keyword id="KW-0547">Nucleotide-binding</keyword>
<keyword id="KW-1185">Reference proteome</keyword>
<evidence type="ECO:0000255" key="1">
    <source>
        <dbReference type="HAMAP-Rule" id="MF_00555"/>
    </source>
</evidence>
<gene>
    <name evidence="1" type="primary">asnA</name>
    <name type="ordered locus">CPE1978</name>
</gene>
<protein>
    <recommendedName>
        <fullName evidence="1">Aspartate--ammonia ligase</fullName>
        <ecNumber evidence="1">6.3.1.1</ecNumber>
    </recommendedName>
    <alternativeName>
        <fullName evidence="1">Asparagine synthetase A</fullName>
    </alternativeName>
</protein>